<protein>
    <recommendedName>
        <fullName evidence="1">Peptide deformylase</fullName>
        <shortName evidence="1">PDF</shortName>
        <ecNumber evidence="1">3.5.1.88</ecNumber>
    </recommendedName>
    <alternativeName>
        <fullName evidence="1">Polypeptide deformylase</fullName>
    </alternativeName>
</protein>
<dbReference type="EC" id="3.5.1.88" evidence="1"/>
<dbReference type="EMBL" id="AJ235270">
    <property type="protein sequence ID" value="CAA14673.1"/>
    <property type="molecule type" value="Genomic_DNA"/>
</dbReference>
<dbReference type="PIR" id="B71732">
    <property type="entry name" value="B71732"/>
</dbReference>
<dbReference type="RefSeq" id="NP_220596.1">
    <property type="nucleotide sequence ID" value="NC_000963.1"/>
</dbReference>
<dbReference type="RefSeq" id="WP_004595989.1">
    <property type="nucleotide sequence ID" value="NC_000963.1"/>
</dbReference>
<dbReference type="SMR" id="Q9ZDV8"/>
<dbReference type="STRING" id="272947.gene:17555289"/>
<dbReference type="EnsemblBacteria" id="CAA14673">
    <property type="protein sequence ID" value="CAA14673"/>
    <property type="gene ID" value="CAA14673"/>
</dbReference>
<dbReference type="GeneID" id="57569336"/>
<dbReference type="KEGG" id="rpr:RP208"/>
<dbReference type="PATRIC" id="fig|272947.5.peg.217"/>
<dbReference type="eggNOG" id="COG0242">
    <property type="taxonomic scope" value="Bacteria"/>
</dbReference>
<dbReference type="HOGENOM" id="CLU_061901_2_2_5"/>
<dbReference type="OrthoDB" id="9804313at2"/>
<dbReference type="Proteomes" id="UP000002480">
    <property type="component" value="Chromosome"/>
</dbReference>
<dbReference type="GO" id="GO:0046872">
    <property type="term" value="F:metal ion binding"/>
    <property type="evidence" value="ECO:0007669"/>
    <property type="project" value="UniProtKB-KW"/>
</dbReference>
<dbReference type="GO" id="GO:0042586">
    <property type="term" value="F:peptide deformylase activity"/>
    <property type="evidence" value="ECO:0007669"/>
    <property type="project" value="UniProtKB-UniRule"/>
</dbReference>
<dbReference type="GO" id="GO:0006412">
    <property type="term" value="P:translation"/>
    <property type="evidence" value="ECO:0007669"/>
    <property type="project" value="UniProtKB-UniRule"/>
</dbReference>
<dbReference type="CDD" id="cd00487">
    <property type="entry name" value="Pep_deformylase"/>
    <property type="match status" value="1"/>
</dbReference>
<dbReference type="FunFam" id="3.90.45.10:FF:000005">
    <property type="entry name" value="Peptide deformylase"/>
    <property type="match status" value="1"/>
</dbReference>
<dbReference type="Gene3D" id="3.90.45.10">
    <property type="entry name" value="Peptide deformylase"/>
    <property type="match status" value="1"/>
</dbReference>
<dbReference type="HAMAP" id="MF_00163">
    <property type="entry name" value="Pep_deformylase"/>
    <property type="match status" value="1"/>
</dbReference>
<dbReference type="InterPro" id="IPR023635">
    <property type="entry name" value="Peptide_deformylase"/>
</dbReference>
<dbReference type="InterPro" id="IPR036821">
    <property type="entry name" value="Peptide_deformylase_sf"/>
</dbReference>
<dbReference type="NCBIfam" id="TIGR00079">
    <property type="entry name" value="pept_deformyl"/>
    <property type="match status" value="1"/>
</dbReference>
<dbReference type="NCBIfam" id="NF001159">
    <property type="entry name" value="PRK00150.1-3"/>
    <property type="match status" value="1"/>
</dbReference>
<dbReference type="PANTHER" id="PTHR10458">
    <property type="entry name" value="PEPTIDE DEFORMYLASE"/>
    <property type="match status" value="1"/>
</dbReference>
<dbReference type="PANTHER" id="PTHR10458:SF22">
    <property type="entry name" value="PEPTIDE DEFORMYLASE"/>
    <property type="match status" value="1"/>
</dbReference>
<dbReference type="Pfam" id="PF01327">
    <property type="entry name" value="Pep_deformylase"/>
    <property type="match status" value="1"/>
</dbReference>
<dbReference type="PIRSF" id="PIRSF004749">
    <property type="entry name" value="Pep_def"/>
    <property type="match status" value="1"/>
</dbReference>
<dbReference type="PRINTS" id="PR01576">
    <property type="entry name" value="PDEFORMYLASE"/>
</dbReference>
<dbReference type="SUPFAM" id="SSF56420">
    <property type="entry name" value="Peptide deformylase"/>
    <property type="match status" value="1"/>
</dbReference>
<sequence>MSIFSIVTAPDERLKQKSKPVLECTDQTRKFMHDMLETMYNADGAGLAAVQVGILLRILVIDIKEYDPVERPKDFYPLFIVNPEIIEKSTELVTANEGCISLPKQRIEVTRPESVKIRYLDYHGKSQELKANDWLARVIQHEYDHLEGKLMVDYLSNLKRDVVLRKLKKLKNNIV</sequence>
<reference key="1">
    <citation type="journal article" date="1998" name="Nature">
        <title>The genome sequence of Rickettsia prowazekii and the origin of mitochondria.</title>
        <authorList>
            <person name="Andersson S.G.E."/>
            <person name="Zomorodipour A."/>
            <person name="Andersson J.O."/>
            <person name="Sicheritz-Ponten T."/>
            <person name="Alsmark U.C.M."/>
            <person name="Podowski R.M."/>
            <person name="Naeslund A.K."/>
            <person name="Eriksson A.-S."/>
            <person name="Winkler H.H."/>
            <person name="Kurland C.G."/>
        </authorList>
    </citation>
    <scope>NUCLEOTIDE SEQUENCE [LARGE SCALE GENOMIC DNA]</scope>
    <source>
        <strain>Madrid E</strain>
    </source>
</reference>
<comment type="function">
    <text evidence="1">Removes the formyl group from the N-terminal Met of newly synthesized proteins. Requires at least a dipeptide for an efficient rate of reaction. N-terminal L-methionine is a prerequisite for activity but the enzyme has broad specificity at other positions.</text>
</comment>
<comment type="catalytic activity">
    <reaction evidence="1">
        <text>N-terminal N-formyl-L-methionyl-[peptide] + H2O = N-terminal L-methionyl-[peptide] + formate</text>
        <dbReference type="Rhea" id="RHEA:24420"/>
        <dbReference type="Rhea" id="RHEA-COMP:10639"/>
        <dbReference type="Rhea" id="RHEA-COMP:10640"/>
        <dbReference type="ChEBI" id="CHEBI:15377"/>
        <dbReference type="ChEBI" id="CHEBI:15740"/>
        <dbReference type="ChEBI" id="CHEBI:49298"/>
        <dbReference type="ChEBI" id="CHEBI:64731"/>
        <dbReference type="EC" id="3.5.1.88"/>
    </reaction>
</comment>
<comment type="cofactor">
    <cofactor evidence="1">
        <name>Fe(2+)</name>
        <dbReference type="ChEBI" id="CHEBI:29033"/>
    </cofactor>
    <text evidence="1">Binds 1 Fe(2+) ion.</text>
</comment>
<comment type="similarity">
    <text evidence="1">Belongs to the polypeptide deformylase family.</text>
</comment>
<accession>Q9ZDV8</accession>
<feature type="chain" id="PRO_0000082831" description="Peptide deformylase">
    <location>
        <begin position="1"/>
        <end position="175"/>
    </location>
</feature>
<feature type="active site" evidence="1">
    <location>
        <position position="142"/>
    </location>
</feature>
<feature type="binding site" evidence="1">
    <location>
        <position position="99"/>
    </location>
    <ligand>
        <name>Fe cation</name>
        <dbReference type="ChEBI" id="CHEBI:24875"/>
    </ligand>
</feature>
<feature type="binding site" evidence="1">
    <location>
        <position position="141"/>
    </location>
    <ligand>
        <name>Fe cation</name>
        <dbReference type="ChEBI" id="CHEBI:24875"/>
    </ligand>
</feature>
<feature type="binding site" evidence="1">
    <location>
        <position position="145"/>
    </location>
    <ligand>
        <name>Fe cation</name>
        <dbReference type="ChEBI" id="CHEBI:24875"/>
    </ligand>
</feature>
<organism>
    <name type="scientific">Rickettsia prowazekii (strain Madrid E)</name>
    <dbReference type="NCBI Taxonomy" id="272947"/>
    <lineage>
        <taxon>Bacteria</taxon>
        <taxon>Pseudomonadati</taxon>
        <taxon>Pseudomonadota</taxon>
        <taxon>Alphaproteobacteria</taxon>
        <taxon>Rickettsiales</taxon>
        <taxon>Rickettsiaceae</taxon>
        <taxon>Rickettsieae</taxon>
        <taxon>Rickettsia</taxon>
        <taxon>typhus group</taxon>
    </lineage>
</organism>
<keyword id="KW-0378">Hydrolase</keyword>
<keyword id="KW-0408">Iron</keyword>
<keyword id="KW-0479">Metal-binding</keyword>
<keyword id="KW-0648">Protein biosynthesis</keyword>
<keyword id="KW-1185">Reference proteome</keyword>
<evidence type="ECO:0000255" key="1">
    <source>
        <dbReference type="HAMAP-Rule" id="MF_00163"/>
    </source>
</evidence>
<gene>
    <name evidence="1" type="primary">def</name>
    <name type="ordered locus">RP208</name>
</gene>
<name>DEF_RICPR</name>
<proteinExistence type="inferred from homology"/>